<comment type="function">
    <text evidence="2 7">Component of the serine palmitoyltransferase multisubunit enzyme (SPT) that catalyzes the initial and rate-limiting step in sphingolipid biosynthesis by condensing L-serine and activated acyl-CoA (most commonly palmitoyl-CoA) to form long-chain bases. The SPT complex is composed of SPTLC1, SPTLC2 or SPTLC3 and SPTSSA or SPTSSB. Within this complex, the heterodimer consisting of SPTLC1 and SPTLC2/SPTLC3 forms the catalytic core. The composition of the serine palmitoyltransferase (SPT) complex determines the substrate preference. The SPTLC1-SPTLC2-SPTSSA complex shows a strong preference for C16-CoA substrate, while the SPTLC1-SPTLC3-SPTSSA isozyme uses both C14-CoA and C16-CoA as substrates, with a slight preference for C14-CoA. The SPTLC1-SPTLC2-SPTSSB complex shows a strong preference for C18-CoA substrate, while the SPTLC1-SPTLC3-SPTSSB isozyme displays an ability to use a broader range of acyl-CoAs, without apparent preference (By similarity). Crucial for adipogenesis (PubMed:28698261).</text>
</comment>
<comment type="catalytic activity">
    <reaction evidence="2">
        <text>L-serine + hexadecanoyl-CoA + H(+) = 3-oxosphinganine + CO2 + CoA</text>
        <dbReference type="Rhea" id="RHEA:14761"/>
        <dbReference type="ChEBI" id="CHEBI:15378"/>
        <dbReference type="ChEBI" id="CHEBI:16526"/>
        <dbReference type="ChEBI" id="CHEBI:33384"/>
        <dbReference type="ChEBI" id="CHEBI:57287"/>
        <dbReference type="ChEBI" id="CHEBI:57379"/>
        <dbReference type="ChEBI" id="CHEBI:58299"/>
        <dbReference type="EC" id="2.3.1.50"/>
    </reaction>
    <physiologicalReaction direction="left-to-right" evidence="2">
        <dbReference type="Rhea" id="RHEA:14762"/>
    </physiologicalReaction>
</comment>
<comment type="catalytic activity">
    <reaction evidence="2">
        <text>octadecanoyl-CoA + L-serine + H(+) = 3-oxoeicosasphinganine + CO2 + CoA</text>
        <dbReference type="Rhea" id="RHEA:33683"/>
        <dbReference type="ChEBI" id="CHEBI:15378"/>
        <dbReference type="ChEBI" id="CHEBI:16526"/>
        <dbReference type="ChEBI" id="CHEBI:33384"/>
        <dbReference type="ChEBI" id="CHEBI:57287"/>
        <dbReference type="ChEBI" id="CHEBI:57394"/>
        <dbReference type="ChEBI" id="CHEBI:65073"/>
    </reaction>
</comment>
<comment type="cofactor">
    <cofactor evidence="1">
        <name>pyridoxal 5'-phosphate</name>
        <dbReference type="ChEBI" id="CHEBI:597326"/>
    </cofactor>
</comment>
<comment type="activity regulation">
    <text evidence="2">SPT complex catalytic activity is negatively regulated by ORMDL proteins, including ORMDL3, in the presence of ceramides. This mechanism allows to maintain ceramide levels at sufficient concentrations for the production of complex sphingolipids, but which prevents the accumulation of ceramides to levels that trigger apoptosis.</text>
</comment>
<comment type="pathway">
    <text evidence="6 7">Lipid metabolism; sphingolipid metabolism.</text>
</comment>
<comment type="subunit">
    <text evidence="2">Component of the serine palmitoyltransferase (SPT) complex, which is composed of SPTLC1, SPTLC2 or SPTLC3 and SPTSSA or SPTSSB. The heterodimer consisting of SPTLC1 and SPTLC2/SPTLC3 forms the catalytic core of the enzyme, while SPTSSA or SPTSSB subunits determine substrate specificity. SPT also interacts with ORMDL proteins, especially ORMDL3, which negatively regulate SPT activity in the presence of ceramides. Forms dimers of heterodimers with SPTLC1.</text>
</comment>
<comment type="subcellular location">
    <subcellularLocation>
        <location evidence="4">Endoplasmic reticulum membrane</location>
        <topology evidence="4">Single-pass membrane protein</topology>
    </subcellularLocation>
</comment>
<comment type="tissue specificity">
    <text evidence="5 6 7">Expressed in a variety of tissues. Expressed in brains cortices (at protein level) (PubMed:21994399). Expressed in brown and white adipose tissues (PubMed:27818258, PubMed:28698261). Expressed in liver (PubMed:27818258).</text>
</comment>
<comment type="developmental stage">
    <text evidence="5 7">In brains, expressed at low levels after birth, expression highly increases at 2 weeks after birth to decrease and be maintained at 4 weeks after birth until, at least, 18 months (PubMed:21994399). Expression increases in differentiated adipocytes (PubMed:28698261).</text>
</comment>
<comment type="induction">
    <text evidence="5 7">Expression levels increase upon high-fat diet (at protein level).</text>
</comment>
<comment type="disruption phenotype">
    <text evidence="6 7">Adipocyte-specific knockout mice have reduced adipose tissue mass and develop hepatosteatosis with insulin resistance and hyperglycemia.</text>
</comment>
<comment type="similarity">
    <text evidence="8">Belongs to the class-II pyridoxal-phosphate-dependent aminotransferase family.</text>
</comment>
<feature type="chain" id="PRO_0000163859" description="Serine palmitoyltransferase 2">
    <location>
        <begin position="1"/>
        <end position="560"/>
    </location>
</feature>
<feature type="transmembrane region" description="Helical" evidence="3">
    <location>
        <begin position="65"/>
        <end position="85"/>
    </location>
</feature>
<feature type="modified residue" description="N6-(pyridoxal phosphate)lysine" evidence="1">
    <location>
        <position position="377"/>
    </location>
</feature>
<dbReference type="EC" id="2.3.1.50" evidence="2"/>
<dbReference type="EMBL" id="U27455">
    <property type="protein sequence ID" value="AAC53310.1"/>
    <property type="molecule type" value="mRNA"/>
</dbReference>
<dbReference type="EMBL" id="X95642">
    <property type="protein sequence ID" value="CAA64898.1"/>
    <property type="molecule type" value="mRNA"/>
</dbReference>
<dbReference type="EMBL" id="BC003227">
    <property type="protein sequence ID" value="AAH03227.1"/>
    <property type="molecule type" value="mRNA"/>
</dbReference>
<dbReference type="CCDS" id="CCDS26076.1"/>
<dbReference type="PIR" id="JC5180">
    <property type="entry name" value="JC5180"/>
</dbReference>
<dbReference type="RefSeq" id="NP_035609.1">
    <property type="nucleotide sequence ID" value="NM_011479.4"/>
</dbReference>
<dbReference type="SMR" id="P97363"/>
<dbReference type="BioGRID" id="203487">
    <property type="interactions" value="16"/>
</dbReference>
<dbReference type="FunCoup" id="P97363">
    <property type="interactions" value="2292"/>
</dbReference>
<dbReference type="IntAct" id="P97363">
    <property type="interactions" value="12"/>
</dbReference>
<dbReference type="STRING" id="10090.ENSMUSP00000021424"/>
<dbReference type="GlyGen" id="P97363">
    <property type="glycosylation" value="2 sites, 1 N-linked glycan (1 site), 1 O-linked glycan (1 site)"/>
</dbReference>
<dbReference type="iPTMnet" id="P97363"/>
<dbReference type="PhosphoSitePlus" id="P97363"/>
<dbReference type="SwissPalm" id="P97363"/>
<dbReference type="jPOST" id="P97363"/>
<dbReference type="PaxDb" id="10090-ENSMUSP00000021424"/>
<dbReference type="PeptideAtlas" id="P97363"/>
<dbReference type="ProteomicsDB" id="257059"/>
<dbReference type="Pumba" id="P97363"/>
<dbReference type="Antibodypedia" id="26092">
    <property type="antibodies" value="267 antibodies from 29 providers"/>
</dbReference>
<dbReference type="DNASU" id="20773"/>
<dbReference type="Ensembl" id="ENSMUST00000021424.5">
    <property type="protein sequence ID" value="ENSMUSP00000021424.5"/>
    <property type="gene ID" value="ENSMUSG00000021036.11"/>
</dbReference>
<dbReference type="GeneID" id="20773"/>
<dbReference type="KEGG" id="mmu:20773"/>
<dbReference type="UCSC" id="uc007oiw.1">
    <property type="organism name" value="mouse"/>
</dbReference>
<dbReference type="AGR" id="MGI:108074"/>
<dbReference type="CTD" id="9517"/>
<dbReference type="MGI" id="MGI:108074">
    <property type="gene designation" value="Sptlc2"/>
</dbReference>
<dbReference type="VEuPathDB" id="HostDB:ENSMUSG00000021036"/>
<dbReference type="eggNOG" id="KOG1357">
    <property type="taxonomic scope" value="Eukaryota"/>
</dbReference>
<dbReference type="GeneTree" id="ENSGT00940000155786"/>
<dbReference type="HOGENOM" id="CLU_015846_7_1_1"/>
<dbReference type="InParanoid" id="P97363"/>
<dbReference type="OMA" id="QPRANGC"/>
<dbReference type="OrthoDB" id="65434at2759"/>
<dbReference type="PhylomeDB" id="P97363"/>
<dbReference type="TreeFam" id="TF300452"/>
<dbReference type="BRENDA" id="2.3.1.50">
    <property type="organism ID" value="3474"/>
</dbReference>
<dbReference type="Reactome" id="R-MMU-1660661">
    <property type="pathway name" value="Sphingolipid de novo biosynthesis"/>
</dbReference>
<dbReference type="UniPathway" id="UPA00222"/>
<dbReference type="BioGRID-ORCS" id="20773">
    <property type="hits" value="26 hits in 81 CRISPR screens"/>
</dbReference>
<dbReference type="ChiTaRS" id="Sptlc2">
    <property type="organism name" value="mouse"/>
</dbReference>
<dbReference type="PRO" id="PR:P97363"/>
<dbReference type="Proteomes" id="UP000000589">
    <property type="component" value="Chromosome 12"/>
</dbReference>
<dbReference type="RNAct" id="P97363">
    <property type="molecule type" value="protein"/>
</dbReference>
<dbReference type="Bgee" id="ENSMUSG00000021036">
    <property type="expression patterns" value="Expressed in decidua and 275 other cell types or tissues"/>
</dbReference>
<dbReference type="ExpressionAtlas" id="P97363">
    <property type="expression patterns" value="baseline and differential"/>
</dbReference>
<dbReference type="GO" id="GO:0005789">
    <property type="term" value="C:endoplasmic reticulum membrane"/>
    <property type="evidence" value="ECO:0007669"/>
    <property type="project" value="UniProtKB-SubCell"/>
</dbReference>
<dbReference type="GO" id="GO:0005739">
    <property type="term" value="C:mitochondrion"/>
    <property type="evidence" value="ECO:0007005"/>
    <property type="project" value="MGI"/>
</dbReference>
<dbReference type="GO" id="GO:0017059">
    <property type="term" value="C:serine palmitoyltransferase complex"/>
    <property type="evidence" value="ECO:0000247"/>
    <property type="project" value="MGI"/>
</dbReference>
<dbReference type="GO" id="GO:0030170">
    <property type="term" value="F:pyridoxal phosphate binding"/>
    <property type="evidence" value="ECO:0007669"/>
    <property type="project" value="InterPro"/>
</dbReference>
<dbReference type="GO" id="GO:0004758">
    <property type="term" value="F:serine C-palmitoyltransferase activity"/>
    <property type="evidence" value="ECO:0007669"/>
    <property type="project" value="UniProtKB-EC"/>
</dbReference>
<dbReference type="GO" id="GO:0060612">
    <property type="term" value="P:adipose tissue development"/>
    <property type="evidence" value="ECO:0000315"/>
    <property type="project" value="UniProtKB"/>
</dbReference>
<dbReference type="GO" id="GO:0046513">
    <property type="term" value="P:ceramide biosynthetic process"/>
    <property type="evidence" value="ECO:0000315"/>
    <property type="project" value="MGI"/>
</dbReference>
<dbReference type="GO" id="GO:0061724">
    <property type="term" value="P:lipophagy"/>
    <property type="evidence" value="ECO:0000266"/>
    <property type="project" value="MGI"/>
</dbReference>
<dbReference type="GO" id="GO:1904504">
    <property type="term" value="P:positive regulation of lipophagy"/>
    <property type="evidence" value="ECO:0000266"/>
    <property type="project" value="MGI"/>
</dbReference>
<dbReference type="GO" id="GO:0046511">
    <property type="term" value="P:sphinganine biosynthetic process"/>
    <property type="evidence" value="ECO:0000314"/>
    <property type="project" value="MGI"/>
</dbReference>
<dbReference type="GO" id="GO:0030148">
    <property type="term" value="P:sphingolipid biosynthetic process"/>
    <property type="evidence" value="ECO:0000315"/>
    <property type="project" value="UniProtKB"/>
</dbReference>
<dbReference type="GO" id="GO:0006686">
    <property type="term" value="P:sphingomyelin biosynthetic process"/>
    <property type="evidence" value="ECO:0000315"/>
    <property type="project" value="MGI"/>
</dbReference>
<dbReference type="GO" id="GO:0046512">
    <property type="term" value="P:sphingosine biosynthetic process"/>
    <property type="evidence" value="ECO:0000315"/>
    <property type="project" value="MGI"/>
</dbReference>
<dbReference type="CDD" id="cd06454">
    <property type="entry name" value="KBL_like"/>
    <property type="match status" value="1"/>
</dbReference>
<dbReference type="FunFam" id="3.90.1150.10:FF:000004">
    <property type="entry name" value="2-amino-3-ketobutyrate coenzyme A ligase"/>
    <property type="match status" value="1"/>
</dbReference>
<dbReference type="FunFam" id="3.40.640.10:FF:000047">
    <property type="entry name" value="serine palmitoyltransferase 2 isoform X1"/>
    <property type="match status" value="1"/>
</dbReference>
<dbReference type="Gene3D" id="3.90.1150.10">
    <property type="entry name" value="Aspartate Aminotransferase, domain 1"/>
    <property type="match status" value="1"/>
</dbReference>
<dbReference type="Gene3D" id="3.40.640.10">
    <property type="entry name" value="Type I PLP-dependent aspartate aminotransferase-like (Major domain)"/>
    <property type="match status" value="1"/>
</dbReference>
<dbReference type="InterPro" id="IPR001917">
    <property type="entry name" value="Aminotrans_II_pyridoxalP_BS"/>
</dbReference>
<dbReference type="InterPro" id="IPR004839">
    <property type="entry name" value="Aminotransferase_I/II_large"/>
</dbReference>
<dbReference type="InterPro" id="IPR050087">
    <property type="entry name" value="AON_synthase_class-II"/>
</dbReference>
<dbReference type="InterPro" id="IPR015424">
    <property type="entry name" value="PyrdxlP-dep_Trfase"/>
</dbReference>
<dbReference type="InterPro" id="IPR015421">
    <property type="entry name" value="PyrdxlP-dep_Trfase_major"/>
</dbReference>
<dbReference type="InterPro" id="IPR015422">
    <property type="entry name" value="PyrdxlP-dep_Trfase_small"/>
</dbReference>
<dbReference type="PANTHER" id="PTHR13693">
    <property type="entry name" value="CLASS II AMINOTRANSFERASE/8-AMINO-7-OXONONANOATE SYNTHASE"/>
    <property type="match status" value="1"/>
</dbReference>
<dbReference type="PANTHER" id="PTHR13693:SF79">
    <property type="entry name" value="SERINE PALMITOYLTRANSFERASE 2"/>
    <property type="match status" value="1"/>
</dbReference>
<dbReference type="Pfam" id="PF00155">
    <property type="entry name" value="Aminotran_1_2"/>
    <property type="match status" value="1"/>
</dbReference>
<dbReference type="SUPFAM" id="SSF53383">
    <property type="entry name" value="PLP-dependent transferases"/>
    <property type="match status" value="1"/>
</dbReference>
<dbReference type="PROSITE" id="PS00599">
    <property type="entry name" value="AA_TRANSFER_CLASS_2"/>
    <property type="match status" value="1"/>
</dbReference>
<sequence length="560" mass="62982">MRPEPGGCCCRRPMRANGCVKNGEVRNGYLRSSTATVAAAGQIHHVTENGGLYKRPFNEAFEETPMLVAVLTYVGYGVLTLFGYLRDFLRHWRIEKCHHATEREEQKDFVSLYQDFENFYTRNLYMRIRDNWNRPICSVPGAKVDIMERKSHDYNWSFKYTGNIIKGVINMGSYNYLGFARNTGSCQEAAAEVLKEYGAGVCSTRQEIGNLDKHEELEKLVARFLGVEAAMTYGMGFATNSMNIPALVGKGCLILSDELNHASLVLGARLSGATIRIFKHNNMQSLEKLLKDAIVYGQPRTRRPWKKILILVEGIYSMEGSIVRLPEVIALKKKYKAYLYLDEAHSIGALGPSGRGVVDYFGLDPEDVDVMMGTFTKSFGASGGYIGGKKELIDYLRTHSHSAVYATSMSPPVMEQIITSMKCIMGQDGTSLGKECIQQLAENTRYFRRRLKEMGFIIYGNEDSPVVPLMLYMPAKIGAFGREMLKRNIGVVVVGFPATPIIESRARFCLSAAHTKEILDTALKEIDEVGDLLQLKYSRHRLVPLLDRPFDETTYEETED</sequence>
<reference key="1">
    <citation type="journal article" date="1996" name="Gene">
        <title>Sphingolipid synthesis: identification and characterization of mammalian cDNAs encoding the Lcb2 subunit of serine palmitoyltransferase.</title>
        <authorList>
            <person name="Nagiec M.M."/>
            <person name="Lester R.L."/>
            <person name="Dickson R.C."/>
        </authorList>
    </citation>
    <scope>NUCLEOTIDE SEQUENCE [MRNA]</scope>
    <source>
        <tissue>Kidney</tissue>
        <tissue>Testis</tissue>
    </source>
</reference>
<reference key="2">
    <citation type="submission" date="1997-01" db="EMBL/GenBank/DDBJ databases">
        <authorList>
            <person name="Nagiec M.M."/>
            <person name="Lester R.L."/>
            <person name="Dickson R.C."/>
        </authorList>
    </citation>
    <scope>NUCLEOTIDE SEQUENCE [MRNA]</scope>
</reference>
<reference key="3">
    <citation type="journal article" date="1997" name="Eur. J. Biochem.">
        <title>Human and murine serine-palmitoyl-CoA transferase. Cloning, expression and characterization of the key enzyme in sphingolipid synthesis.</title>
        <authorList>
            <person name="Weiss B."/>
            <person name="Stoffel W."/>
        </authorList>
    </citation>
    <scope>NUCLEOTIDE SEQUENCE [MRNA]</scope>
    <source>
        <strain>BALB/cJ</strain>
        <tissue>Kidney</tissue>
        <tissue>Liver</tissue>
    </source>
</reference>
<reference key="4">
    <citation type="journal article" date="2004" name="Genome Res.">
        <title>The status, quality, and expansion of the NIH full-length cDNA project: the Mammalian Gene Collection (MGC).</title>
        <authorList>
            <consortium name="The MGC Project Team"/>
        </authorList>
    </citation>
    <scope>NUCLEOTIDE SEQUENCE [LARGE SCALE MRNA]</scope>
    <source>
        <strain>C57BL/6J</strain>
        <tissue>Mammary gland</tissue>
    </source>
</reference>
<reference key="5">
    <citation type="journal article" date="1992" name="J. Biol. Chem.">
        <title>Subcellular localization and membrane topology of serine palmitoyltransferase, 3-dehydrosphinganine reductase, and sphinganine N-acyltransferase in mouse liver.</title>
        <authorList>
            <person name="Mandon E.C."/>
            <person name="Ehses I."/>
            <person name="Rother J."/>
            <person name="van Echten G."/>
            <person name="Sandhoff K."/>
        </authorList>
    </citation>
    <scope>SUBCELLULAR LOCATION</scope>
    <source>
        <tissue>Liver</tissue>
    </source>
</reference>
<reference key="6">
    <citation type="journal article" date="2010" name="Cell">
        <title>A tissue-specific atlas of mouse protein phosphorylation and expression.</title>
        <authorList>
            <person name="Huttlin E.L."/>
            <person name="Jedrychowski M.P."/>
            <person name="Elias J.E."/>
            <person name="Goswami T."/>
            <person name="Rad R."/>
            <person name="Beausoleil S.A."/>
            <person name="Villen J."/>
            <person name="Haas W."/>
            <person name="Sowa M.E."/>
            <person name="Gygi S.P."/>
        </authorList>
    </citation>
    <scope>IDENTIFICATION BY MASS SPECTROMETRY [LARGE SCALE ANALYSIS]</scope>
    <source>
        <tissue>Kidney</tissue>
        <tissue>Lung</tissue>
        <tissue>Spleen</tissue>
        <tissue>Testis</tissue>
    </source>
</reference>
<reference key="7">
    <citation type="journal article" date="2011" name="J. Neurosci.">
        <title>MicroRNA-137/181c regulates serine palmitoyltransferase and in turn amyloid beta, novel targets in sporadic Alzheimer's disease.</title>
        <authorList>
            <person name="Geekiyanage H."/>
            <person name="Chan C."/>
        </authorList>
    </citation>
    <scope>INDUCTION BY HIGH FAT DIET</scope>
    <scope>TISSUE SPECIFICITY</scope>
    <scope>DEVELOPMENTAL STAGE</scope>
</reference>
<reference key="8">
    <citation type="journal article" date="2016" name="Cell Metab.">
        <title>Adipocyte Ceramides Regulate Subcutaneous Adipose Browning, Inflammation, and Metabolism.</title>
        <authorList>
            <person name="Chaurasia B."/>
            <person name="Kaddai V.A."/>
            <person name="Lancaster G.I."/>
            <person name="Henstridge D.C."/>
            <person name="Sriram S."/>
            <person name="Galam D.L."/>
            <person name="Gopalan V."/>
            <person name="Prakash K.N."/>
            <person name="Velan S.S."/>
            <person name="Bulchand S."/>
            <person name="Tsong T.J."/>
            <person name="Wang M."/>
            <person name="Siddique M.M."/>
            <person name="Yuguang G."/>
            <person name="Sigmundsson K."/>
            <person name="Mellet N.A."/>
            <person name="Weir J.M."/>
            <person name="Meikle P.J."/>
            <person name="Bin M Yassin M.S."/>
            <person name="Shabbir A."/>
            <person name="Shayman J.A."/>
            <person name="Hirabayashi Y."/>
            <person name="Shiow S.T."/>
            <person name="Sugii S."/>
            <person name="Summers S.A."/>
        </authorList>
    </citation>
    <scope>DISRUPTION PHENOTYPE</scope>
    <scope>TISSUE SPECIFICITY</scope>
    <scope>PATHWAY</scope>
</reference>
<reference key="9">
    <citation type="journal article" date="2017" name="Diabetes">
        <title>Adipocyte-Specific Deficiency of De Novo Sphingolipid Biosynthesis Leads to Lipodystrophy and Insulin Resistance.</title>
        <authorList>
            <person name="Lee S.Y."/>
            <person name="Lee H.Y."/>
            <person name="Song J.H."/>
            <person name="Kim G.T."/>
            <person name="Jeon S."/>
            <person name="Song Y.J."/>
            <person name="Lee J.S."/>
            <person name="Hur J.H."/>
            <person name="Oh H.H."/>
            <person name="Park S.Y."/>
            <person name="Shim S.M."/>
            <person name="Yoo H.J."/>
            <person name="Lee B.C."/>
            <person name="Jiang X.C."/>
            <person name="Choi C.S."/>
            <person name="Park T.S."/>
        </authorList>
    </citation>
    <scope>FUNCTION</scope>
    <scope>DISRUPTION PHENOTYPE</scope>
    <scope>DEVELOPMENTAL STAGE</scope>
    <scope>INDUCTION BY HIGH FAT DIET</scope>
    <scope>TISSUE SPECIFICITY</scope>
    <scope>PATHWAY</scope>
</reference>
<keyword id="KW-0012">Acyltransferase</keyword>
<keyword id="KW-0256">Endoplasmic reticulum</keyword>
<keyword id="KW-0443">Lipid metabolism</keyword>
<keyword id="KW-0472">Membrane</keyword>
<keyword id="KW-0663">Pyridoxal phosphate</keyword>
<keyword id="KW-1185">Reference proteome</keyword>
<keyword id="KW-0746">Sphingolipid metabolism</keyword>
<keyword id="KW-0808">Transferase</keyword>
<keyword id="KW-0812">Transmembrane</keyword>
<keyword id="KW-1133">Transmembrane helix</keyword>
<protein>
    <recommendedName>
        <fullName evidence="8">Serine palmitoyltransferase 2</fullName>
        <ecNumber evidence="2">2.3.1.50</ecNumber>
    </recommendedName>
    <alternativeName>
        <fullName>Long chain base biosynthesis protein 2</fullName>
        <shortName>LCB 2</shortName>
    </alternativeName>
    <alternativeName>
        <fullName>Long chain base biosynthesis protein 2a</fullName>
        <shortName>LCB2a</shortName>
    </alternativeName>
    <alternativeName>
        <fullName>Serine-palmitoyl-CoA transferase 2</fullName>
        <shortName>SPT 2</shortName>
    </alternativeName>
</protein>
<gene>
    <name evidence="9" type="primary">Sptlc2</name>
    <name type="synonym">Lcb2</name>
</gene>
<name>SPTC2_MOUSE</name>
<accession>P97363</accession>
<accession>P97356</accession>
<evidence type="ECO:0000250" key="1"/>
<evidence type="ECO:0000250" key="2">
    <source>
        <dbReference type="UniProtKB" id="O15270"/>
    </source>
</evidence>
<evidence type="ECO:0000255" key="3"/>
<evidence type="ECO:0000269" key="4">
    <source>
    </source>
</evidence>
<evidence type="ECO:0000269" key="5">
    <source>
    </source>
</evidence>
<evidence type="ECO:0000269" key="6">
    <source>
    </source>
</evidence>
<evidence type="ECO:0000269" key="7">
    <source>
    </source>
</evidence>
<evidence type="ECO:0000305" key="8"/>
<evidence type="ECO:0000312" key="9">
    <source>
        <dbReference type="MGI" id="MGI:108074"/>
    </source>
</evidence>
<proteinExistence type="evidence at protein level"/>
<organism>
    <name type="scientific">Mus musculus</name>
    <name type="common">Mouse</name>
    <dbReference type="NCBI Taxonomy" id="10090"/>
    <lineage>
        <taxon>Eukaryota</taxon>
        <taxon>Metazoa</taxon>
        <taxon>Chordata</taxon>
        <taxon>Craniata</taxon>
        <taxon>Vertebrata</taxon>
        <taxon>Euteleostomi</taxon>
        <taxon>Mammalia</taxon>
        <taxon>Eutheria</taxon>
        <taxon>Euarchontoglires</taxon>
        <taxon>Glires</taxon>
        <taxon>Rodentia</taxon>
        <taxon>Myomorpha</taxon>
        <taxon>Muroidea</taxon>
        <taxon>Muridae</taxon>
        <taxon>Murinae</taxon>
        <taxon>Mus</taxon>
        <taxon>Mus</taxon>
    </lineage>
</organism>